<protein>
    <recommendedName>
        <fullName>Uncharacterized protein P6</fullName>
    </recommendedName>
    <alternativeName>
        <fullName>ORF6 protein</fullName>
    </alternativeName>
</protein>
<name>P6_PLRVW</name>
<sequence>MLQSMVQTGPEFLHQGTHLNLEFPAIQELLLTFLRKPIYWRIGMPNTSTLVIPKKMSLLLLL</sequence>
<organismHost>
    <name type="scientific">Solanum tuberosum</name>
    <name type="common">Potato</name>
    <dbReference type="NCBI Taxonomy" id="4113"/>
</organismHost>
<organism>
    <name type="scientific">Potato leafroll virus (strain Potato/Netherlands/Wageningen/1989)</name>
    <name type="common">PLrV</name>
    <dbReference type="NCBI Taxonomy" id="12048"/>
    <lineage>
        <taxon>Viruses</taxon>
        <taxon>Riboviria</taxon>
        <taxon>Orthornavirae</taxon>
        <taxon>Pisuviricota</taxon>
        <taxon>Pisoniviricetes</taxon>
        <taxon>Sobelivirales</taxon>
        <taxon>Solemoviridae</taxon>
        <taxon>Polerovirus</taxon>
        <taxon>Potato leafroll virus</taxon>
    </lineage>
</organism>
<feature type="chain" id="PRO_0000399909" description="Uncharacterized protein P6">
    <location>
        <begin position="1"/>
        <end position="62"/>
    </location>
</feature>
<proteinExistence type="predicted"/>
<dbReference type="EMBL" id="Y07496">
    <property type="status" value="NOT_ANNOTATED_CDS"/>
    <property type="molecule type" value="Genomic_RNA"/>
</dbReference>
<dbReference type="Proteomes" id="UP000000474">
    <property type="component" value="Genome"/>
</dbReference>
<reference key="1">
    <citation type="journal article" date="1989" name="FEBS Lett.">
        <title>Nucleotide sequence and organization of potato leafroll virus genomic RNA.</title>
        <authorList>
            <person name="van der Wilk F."/>
            <person name="Huisman M.J."/>
            <person name="Cornelissen B.J.C."/>
            <person name="Huttinga H."/>
            <person name="Goldbach R.W."/>
        </authorList>
    </citation>
    <scope>NUCLEOTIDE SEQUENCE [GENOMIC RNA]</scope>
</reference>
<accession>P0C784</accession>